<reference key="1">
    <citation type="journal article" date="2005" name="Science">
        <title>The transcriptional landscape of the mammalian genome.</title>
        <authorList>
            <person name="Carninci P."/>
            <person name="Kasukawa T."/>
            <person name="Katayama S."/>
            <person name="Gough J."/>
            <person name="Frith M.C."/>
            <person name="Maeda N."/>
            <person name="Oyama R."/>
            <person name="Ravasi T."/>
            <person name="Lenhard B."/>
            <person name="Wells C."/>
            <person name="Kodzius R."/>
            <person name="Shimokawa K."/>
            <person name="Bajic V.B."/>
            <person name="Brenner S.E."/>
            <person name="Batalov S."/>
            <person name="Forrest A.R."/>
            <person name="Zavolan M."/>
            <person name="Davis M.J."/>
            <person name="Wilming L.G."/>
            <person name="Aidinis V."/>
            <person name="Allen J.E."/>
            <person name="Ambesi-Impiombato A."/>
            <person name="Apweiler R."/>
            <person name="Aturaliya R.N."/>
            <person name="Bailey T.L."/>
            <person name="Bansal M."/>
            <person name="Baxter L."/>
            <person name="Beisel K.W."/>
            <person name="Bersano T."/>
            <person name="Bono H."/>
            <person name="Chalk A.M."/>
            <person name="Chiu K.P."/>
            <person name="Choudhary V."/>
            <person name="Christoffels A."/>
            <person name="Clutterbuck D.R."/>
            <person name="Crowe M.L."/>
            <person name="Dalla E."/>
            <person name="Dalrymple B.P."/>
            <person name="de Bono B."/>
            <person name="Della Gatta G."/>
            <person name="di Bernardo D."/>
            <person name="Down T."/>
            <person name="Engstrom P."/>
            <person name="Fagiolini M."/>
            <person name="Faulkner G."/>
            <person name="Fletcher C.F."/>
            <person name="Fukushima T."/>
            <person name="Furuno M."/>
            <person name="Futaki S."/>
            <person name="Gariboldi M."/>
            <person name="Georgii-Hemming P."/>
            <person name="Gingeras T.R."/>
            <person name="Gojobori T."/>
            <person name="Green R.E."/>
            <person name="Gustincich S."/>
            <person name="Harbers M."/>
            <person name="Hayashi Y."/>
            <person name="Hensch T.K."/>
            <person name="Hirokawa N."/>
            <person name="Hill D."/>
            <person name="Huminiecki L."/>
            <person name="Iacono M."/>
            <person name="Ikeo K."/>
            <person name="Iwama A."/>
            <person name="Ishikawa T."/>
            <person name="Jakt M."/>
            <person name="Kanapin A."/>
            <person name="Katoh M."/>
            <person name="Kawasawa Y."/>
            <person name="Kelso J."/>
            <person name="Kitamura H."/>
            <person name="Kitano H."/>
            <person name="Kollias G."/>
            <person name="Krishnan S.P."/>
            <person name="Kruger A."/>
            <person name="Kummerfeld S.K."/>
            <person name="Kurochkin I.V."/>
            <person name="Lareau L.F."/>
            <person name="Lazarevic D."/>
            <person name="Lipovich L."/>
            <person name="Liu J."/>
            <person name="Liuni S."/>
            <person name="McWilliam S."/>
            <person name="Madan Babu M."/>
            <person name="Madera M."/>
            <person name="Marchionni L."/>
            <person name="Matsuda H."/>
            <person name="Matsuzawa S."/>
            <person name="Miki H."/>
            <person name="Mignone F."/>
            <person name="Miyake S."/>
            <person name="Morris K."/>
            <person name="Mottagui-Tabar S."/>
            <person name="Mulder N."/>
            <person name="Nakano N."/>
            <person name="Nakauchi H."/>
            <person name="Ng P."/>
            <person name="Nilsson R."/>
            <person name="Nishiguchi S."/>
            <person name="Nishikawa S."/>
            <person name="Nori F."/>
            <person name="Ohara O."/>
            <person name="Okazaki Y."/>
            <person name="Orlando V."/>
            <person name="Pang K.C."/>
            <person name="Pavan W.J."/>
            <person name="Pavesi G."/>
            <person name="Pesole G."/>
            <person name="Petrovsky N."/>
            <person name="Piazza S."/>
            <person name="Reed J."/>
            <person name="Reid J.F."/>
            <person name="Ring B.Z."/>
            <person name="Ringwald M."/>
            <person name="Rost B."/>
            <person name="Ruan Y."/>
            <person name="Salzberg S.L."/>
            <person name="Sandelin A."/>
            <person name="Schneider C."/>
            <person name="Schoenbach C."/>
            <person name="Sekiguchi K."/>
            <person name="Semple C.A."/>
            <person name="Seno S."/>
            <person name="Sessa L."/>
            <person name="Sheng Y."/>
            <person name="Shibata Y."/>
            <person name="Shimada H."/>
            <person name="Shimada K."/>
            <person name="Silva D."/>
            <person name="Sinclair B."/>
            <person name="Sperling S."/>
            <person name="Stupka E."/>
            <person name="Sugiura K."/>
            <person name="Sultana R."/>
            <person name="Takenaka Y."/>
            <person name="Taki K."/>
            <person name="Tammoja K."/>
            <person name="Tan S.L."/>
            <person name="Tang S."/>
            <person name="Taylor M.S."/>
            <person name="Tegner J."/>
            <person name="Teichmann S.A."/>
            <person name="Ueda H.R."/>
            <person name="van Nimwegen E."/>
            <person name="Verardo R."/>
            <person name="Wei C.L."/>
            <person name="Yagi K."/>
            <person name="Yamanishi H."/>
            <person name="Zabarovsky E."/>
            <person name="Zhu S."/>
            <person name="Zimmer A."/>
            <person name="Hide W."/>
            <person name="Bult C."/>
            <person name="Grimmond S.M."/>
            <person name="Teasdale R.D."/>
            <person name="Liu E.T."/>
            <person name="Brusic V."/>
            <person name="Quackenbush J."/>
            <person name="Wahlestedt C."/>
            <person name="Mattick J.S."/>
            <person name="Hume D.A."/>
            <person name="Kai C."/>
            <person name="Sasaki D."/>
            <person name="Tomaru Y."/>
            <person name="Fukuda S."/>
            <person name="Kanamori-Katayama M."/>
            <person name="Suzuki M."/>
            <person name="Aoki J."/>
            <person name="Arakawa T."/>
            <person name="Iida J."/>
            <person name="Imamura K."/>
            <person name="Itoh M."/>
            <person name="Kato T."/>
            <person name="Kawaji H."/>
            <person name="Kawagashira N."/>
            <person name="Kawashima T."/>
            <person name="Kojima M."/>
            <person name="Kondo S."/>
            <person name="Konno H."/>
            <person name="Nakano K."/>
            <person name="Ninomiya N."/>
            <person name="Nishio T."/>
            <person name="Okada M."/>
            <person name="Plessy C."/>
            <person name="Shibata K."/>
            <person name="Shiraki T."/>
            <person name="Suzuki S."/>
            <person name="Tagami M."/>
            <person name="Waki K."/>
            <person name="Watahiki A."/>
            <person name="Okamura-Oho Y."/>
            <person name="Suzuki H."/>
            <person name="Kawai J."/>
            <person name="Hayashizaki Y."/>
        </authorList>
    </citation>
    <scope>NUCLEOTIDE SEQUENCE [LARGE SCALE MRNA] (ISOFORM 1)</scope>
    <source>
        <strain>C57BL/6J</strain>
        <tissue>Bone marrow</tissue>
        <tissue>Heart</tissue>
        <tissue>Kidney</tissue>
    </source>
</reference>
<reference key="2">
    <citation type="journal article" date="2004" name="Genome Res.">
        <title>The status, quality, and expansion of the NIH full-length cDNA project: the Mammalian Gene Collection (MGC).</title>
        <authorList>
            <consortium name="The MGC Project Team"/>
        </authorList>
    </citation>
    <scope>NUCLEOTIDE SEQUENCE [LARGE SCALE MRNA] (ISOFORMS 1 AND 2)</scope>
    <source>
        <strain>C57BL/6J</strain>
        <tissue>Brain</tissue>
    </source>
</reference>
<reference key="3">
    <citation type="journal article" date="2018" name="Elife">
        <title>Identification of a transporter complex responsible for the cytosolic entry of nitrogen-containing bisphosphonates.</title>
        <authorList>
            <person name="Yu Z."/>
            <person name="Surface L.E."/>
            <person name="Park C.Y."/>
            <person name="Horlbeck M.A."/>
            <person name="Wyant G.A."/>
            <person name="Abu-Remaileh M."/>
            <person name="Peterson T.R."/>
            <person name="Sabatini D.M."/>
            <person name="Weissman J.S."/>
            <person name="O'Shea E.K."/>
        </authorList>
    </citation>
    <scope>FUNCTION</scope>
    <scope>SUBCELLULAR LOCATION</scope>
    <scope>INTERACTION WITH SLC37A3</scope>
</reference>
<name>ARAID_MOUSE</name>
<keyword id="KW-0025">Alternative splicing</keyword>
<keyword id="KW-1003">Cell membrane</keyword>
<keyword id="KW-0221">Differentiation</keyword>
<keyword id="KW-1015">Disulfide bond</keyword>
<keyword id="KW-0245">EGF-like domain</keyword>
<keyword id="KW-0458">Lysosome</keyword>
<keyword id="KW-0472">Membrane</keyword>
<keyword id="KW-0539">Nucleus</keyword>
<keyword id="KW-1185">Reference proteome</keyword>
<keyword id="KW-0732">Signal</keyword>
<keyword id="KW-0812">Transmembrane</keyword>
<keyword id="KW-1133">Transmembrane helix</keyword>
<comment type="function">
    <text evidence="2 5">Promotes osteoblast cell differentiation and terminal mineralization. Plays a role in inducing the cell cycle arrest via inhibiting CCND1 expression in all-trans-retinoic acid (ATRA) signal pathway (By similarity). In osteoclasts, forms a transporter complex with ATRAID for nitrogen-containing-bisphophonates (N-BPs) required for releasing N-BP molecules that have trafficked to lysosomes through fluid-phase endocytosis into the cytosol (PubMed:29745899).</text>
</comment>
<comment type="subunit">
    <text evidence="2 5">Interacts with NELL1; the interaction promotes osteoblastic differentiation and mineralization (By similarity). Interacts with SLC37A3; the interaction is direct and both proteins are mutually dependent for their stability (PubMed:29745899).</text>
</comment>
<comment type="subcellular location">
    <subcellularLocation>
        <location evidence="2">Nucleus envelope</location>
    </subcellularLocation>
    <subcellularLocation>
        <location evidence="2">Cell membrane</location>
        <topology evidence="2">Single-pass membrane protein</topology>
    </subcellularLocation>
    <subcellularLocation>
        <location evidence="5">Lysosome membrane</location>
        <topology evidence="3">Multi-pass membrane protein</topology>
    </subcellularLocation>
    <text evidence="2">Colocalizes with NELL1 on the nuclear envelope and the perinuclear region.</text>
</comment>
<comment type="alternative products">
    <event type="alternative splicing"/>
    <isoform>
        <id>Q6PGD0-1</id>
        <name>1</name>
        <sequence type="displayed"/>
    </isoform>
    <isoform>
        <id>Q6PGD0-2</id>
        <name>2</name>
        <sequence type="described" ref="VSP_039970"/>
    </isoform>
</comment>
<comment type="miscellaneous">
    <molecule>Isoform 2</molecule>
    <text evidence="7">May be produced at very low levels due to a premature stop codon in the mRNA, leading to nonsense-mediated mRNA decay.</text>
</comment>
<comment type="sequence caution" evidence="7">
    <conflict type="erroneous translation">
        <sequence resource="EMBL-CDS" id="AAH49637"/>
    </conflict>
    <text>Wrong choice of CDS.</text>
</comment>
<gene>
    <name type="primary">Atraid</name>
    <name type="synonym">Apr3</name>
</gene>
<dbReference type="EMBL" id="AK002276">
    <property type="protein sequence ID" value="BAB21981.1"/>
    <property type="molecule type" value="mRNA"/>
</dbReference>
<dbReference type="EMBL" id="AK151307">
    <property type="protein sequence ID" value="BAE30289.1"/>
    <property type="molecule type" value="mRNA"/>
</dbReference>
<dbReference type="EMBL" id="AK151366">
    <property type="protein sequence ID" value="BAE30340.1"/>
    <property type="molecule type" value="mRNA"/>
</dbReference>
<dbReference type="EMBL" id="AK169267">
    <property type="protein sequence ID" value="BAE41028.1"/>
    <property type="molecule type" value="mRNA"/>
</dbReference>
<dbReference type="EMBL" id="BC049637">
    <property type="protein sequence ID" value="AAH49637.1"/>
    <property type="status" value="ALT_SEQ"/>
    <property type="molecule type" value="mRNA"/>
</dbReference>
<dbReference type="EMBL" id="BC057097">
    <property type="protein sequence ID" value="AAH57097.2"/>
    <property type="molecule type" value="mRNA"/>
</dbReference>
<dbReference type="CCDS" id="CCDS19170.1">
    <molecule id="Q6PGD0-1"/>
</dbReference>
<dbReference type="RefSeq" id="NP_082131.2">
    <molecule id="Q6PGD0-1"/>
    <property type="nucleotide sequence ID" value="NM_027855.4"/>
</dbReference>
<dbReference type="RefSeq" id="NP_997635.1">
    <property type="nucleotide sequence ID" value="NM_212470.3"/>
</dbReference>
<dbReference type="BioGRID" id="238018">
    <property type="interactions" value="1"/>
</dbReference>
<dbReference type="FunCoup" id="Q6PGD0">
    <property type="interactions" value="1065"/>
</dbReference>
<dbReference type="STRING" id="10090.ENSMUSP00000013766"/>
<dbReference type="GlyGen" id="Q6PGD0">
    <property type="glycosylation" value="3 sites, 3 N-linked glycans (3 sites)"/>
</dbReference>
<dbReference type="iPTMnet" id="Q6PGD0"/>
<dbReference type="PhosphoSitePlus" id="Q6PGD0"/>
<dbReference type="PaxDb" id="10090-ENSMUSP00000013766"/>
<dbReference type="ProteomicsDB" id="282009">
    <molecule id="Q6PGD0-1"/>
</dbReference>
<dbReference type="Pumba" id="Q6PGD0"/>
<dbReference type="Antibodypedia" id="28263">
    <property type="antibodies" value="98 antibodies from 23 providers"/>
</dbReference>
<dbReference type="DNASU" id="381629"/>
<dbReference type="Ensembl" id="ENSMUST00000013766.13">
    <molecule id="Q6PGD0-1"/>
    <property type="protein sequence ID" value="ENSMUSP00000013766.7"/>
    <property type="gene ID" value="ENSMUSG00000013622.16"/>
</dbReference>
<dbReference type="Ensembl" id="ENSMUST00000200942.2">
    <molecule id="Q6PGD0-2"/>
    <property type="protein sequence ID" value="ENSMUSP00000144431.2"/>
    <property type="gene ID" value="ENSMUSG00000013622.16"/>
</dbReference>
<dbReference type="GeneID" id="381629"/>
<dbReference type="KEGG" id="mmu:381629"/>
<dbReference type="UCSC" id="uc008www.3">
    <molecule id="Q6PGD0-1"/>
    <property type="organism name" value="mouse"/>
</dbReference>
<dbReference type="AGR" id="MGI:1918918"/>
<dbReference type="CTD" id="51374"/>
<dbReference type="MGI" id="MGI:1918918">
    <property type="gene designation" value="Atraid"/>
</dbReference>
<dbReference type="VEuPathDB" id="HostDB:ENSMUSG00000013622"/>
<dbReference type="eggNOG" id="ENOG502S1YR">
    <property type="taxonomic scope" value="Eukaryota"/>
</dbReference>
<dbReference type="GeneTree" id="ENSGT00390000017252"/>
<dbReference type="InParanoid" id="Q6PGD0"/>
<dbReference type="OMA" id="KMAPHGP"/>
<dbReference type="OrthoDB" id="9989713at2759"/>
<dbReference type="PhylomeDB" id="Q6PGD0"/>
<dbReference type="TreeFam" id="TF335766"/>
<dbReference type="BioGRID-ORCS" id="381629">
    <property type="hits" value="2 hits in 75 CRISPR screens"/>
</dbReference>
<dbReference type="ChiTaRS" id="Atraid">
    <property type="organism name" value="mouse"/>
</dbReference>
<dbReference type="PRO" id="PR:Q6PGD0"/>
<dbReference type="Proteomes" id="UP000000589">
    <property type="component" value="Chromosome 5"/>
</dbReference>
<dbReference type="RNAct" id="Q6PGD0">
    <property type="molecule type" value="protein"/>
</dbReference>
<dbReference type="Bgee" id="ENSMUSG00000013622">
    <property type="expression patterns" value="Expressed in placenta labyrinth and 259 other cell types or tissues"/>
</dbReference>
<dbReference type="ExpressionAtlas" id="Q6PGD0">
    <property type="expression patterns" value="baseline and differential"/>
</dbReference>
<dbReference type="GO" id="GO:0005765">
    <property type="term" value="C:lysosomal membrane"/>
    <property type="evidence" value="ECO:0000314"/>
    <property type="project" value="UniProtKB"/>
</dbReference>
<dbReference type="GO" id="GO:0005635">
    <property type="term" value="C:nuclear envelope"/>
    <property type="evidence" value="ECO:0000250"/>
    <property type="project" value="UniProtKB"/>
</dbReference>
<dbReference type="GO" id="GO:0048471">
    <property type="term" value="C:perinuclear region of cytoplasm"/>
    <property type="evidence" value="ECO:0000250"/>
    <property type="project" value="UniProtKB"/>
</dbReference>
<dbReference type="GO" id="GO:0005886">
    <property type="term" value="C:plasma membrane"/>
    <property type="evidence" value="ECO:0007669"/>
    <property type="project" value="UniProtKB-SubCell"/>
</dbReference>
<dbReference type="GO" id="GO:0042910">
    <property type="term" value="F:xenobiotic transmembrane transporter activity"/>
    <property type="evidence" value="ECO:0000314"/>
    <property type="project" value="UniProtKB"/>
</dbReference>
<dbReference type="GO" id="GO:0030154">
    <property type="term" value="P:cell differentiation"/>
    <property type="evidence" value="ECO:0007669"/>
    <property type="project" value="UniProtKB-KW"/>
</dbReference>
<dbReference type="GO" id="GO:0033689">
    <property type="term" value="P:negative regulation of osteoblast proliferation"/>
    <property type="evidence" value="ECO:0000250"/>
    <property type="project" value="UniProtKB"/>
</dbReference>
<dbReference type="GO" id="GO:0042177">
    <property type="term" value="P:negative regulation of protein catabolic process"/>
    <property type="evidence" value="ECO:0000250"/>
    <property type="project" value="UniProtKB"/>
</dbReference>
<dbReference type="GO" id="GO:0030501">
    <property type="term" value="P:positive regulation of bone mineralization"/>
    <property type="evidence" value="ECO:0000250"/>
    <property type="project" value="UniProtKB"/>
</dbReference>
<dbReference type="GO" id="GO:0045669">
    <property type="term" value="P:positive regulation of osteoblast differentiation"/>
    <property type="evidence" value="ECO:0000250"/>
    <property type="project" value="UniProtKB"/>
</dbReference>
<dbReference type="GO" id="GO:0010468">
    <property type="term" value="P:regulation of gene expression"/>
    <property type="evidence" value="ECO:0000250"/>
    <property type="project" value="UniProtKB"/>
</dbReference>
<dbReference type="GO" id="GO:0006855">
    <property type="term" value="P:xenobiotic transmembrane transport"/>
    <property type="evidence" value="ECO:0000314"/>
    <property type="project" value="UniProtKB"/>
</dbReference>
<dbReference type="InterPro" id="IPR042350">
    <property type="entry name" value="ATRAID"/>
</dbReference>
<dbReference type="InterPro" id="IPR000742">
    <property type="entry name" value="EGF-like_dom"/>
</dbReference>
<dbReference type="PANTHER" id="PTHR15926">
    <property type="entry name" value="ALL-TRANS RETINOIC ACID-INDUCED DIFFERENTIATION FACTOR"/>
    <property type="match status" value="1"/>
</dbReference>
<dbReference type="PANTHER" id="PTHR15926:SF1">
    <property type="entry name" value="ALL-TRANS RETINOIC ACID-INDUCED DIFFERENTIATION FACTOR"/>
    <property type="match status" value="1"/>
</dbReference>
<dbReference type="PROSITE" id="PS00022">
    <property type="entry name" value="EGF_1"/>
    <property type="match status" value="1"/>
</dbReference>
<dbReference type="PROSITE" id="PS01186">
    <property type="entry name" value="EGF_2"/>
    <property type="match status" value="1"/>
</dbReference>
<dbReference type="PROSITE" id="PS50026">
    <property type="entry name" value="EGF_3"/>
    <property type="match status" value="1"/>
</dbReference>
<accession>Q6PGD0</accession>
<accession>Q3UAH4</accession>
<accession>Q810Q3</accession>
<accession>Q9DD14</accession>
<protein>
    <recommendedName>
        <fullName>All-trans retinoic acid-induced differentiation factor</fullName>
    </recommendedName>
    <alternativeName>
        <fullName>Apoptosis-related protein 3</fullName>
        <shortName>APR-3</shortName>
    </alternativeName>
</protein>
<sequence length="223" mass="23858">MASRESGGSRAAALLLVLGVERALALPEICTLCPGGMHNLSRVAAYCEDTSKLMQARCCLNQKGTILGLDLQNCSLKDPGPNFLQAYTAIIIDLQANPLKDDLANTFRGFTQLQTLILPQDVPCPGGSNAWDNVTSFKDKQICQGQRDLCNSTGSPEMCPENGSCASDGPGLLQCVCADGFHGYKCMRQGSFSLLMFFGILGSTTLAISILLWGTQRRKAKAS</sequence>
<evidence type="ECO:0000250" key="1"/>
<evidence type="ECO:0000250" key="2">
    <source>
        <dbReference type="UniProtKB" id="Q6UW56"/>
    </source>
</evidence>
<evidence type="ECO:0000255" key="3"/>
<evidence type="ECO:0000255" key="4">
    <source>
        <dbReference type="PROSITE-ProRule" id="PRU00076"/>
    </source>
</evidence>
<evidence type="ECO:0000269" key="5">
    <source>
    </source>
</evidence>
<evidence type="ECO:0000303" key="6">
    <source>
    </source>
</evidence>
<evidence type="ECO:0000305" key="7"/>
<feature type="signal peptide" evidence="1">
    <location>
        <begin position="1"/>
        <end position="25"/>
    </location>
</feature>
<feature type="chain" id="PRO_0000020753" description="All-trans retinoic acid-induced differentiation factor">
    <location>
        <begin position="26"/>
        <end position="223"/>
    </location>
</feature>
<feature type="topological domain" description="Extracellular" evidence="3">
    <location>
        <begin position="26"/>
        <end position="193"/>
    </location>
</feature>
<feature type="transmembrane region" description="Helical" evidence="3">
    <location>
        <begin position="194"/>
        <end position="214"/>
    </location>
</feature>
<feature type="topological domain" description="Cytoplasmic" evidence="3">
    <location>
        <begin position="215"/>
        <end position="223"/>
    </location>
</feature>
<feature type="domain" description="EGF-like" evidence="4">
    <location>
        <begin position="146"/>
        <end position="187"/>
    </location>
</feature>
<feature type="disulfide bond" evidence="4">
    <location>
        <begin position="150"/>
        <end position="165"/>
    </location>
</feature>
<feature type="disulfide bond" evidence="4">
    <location>
        <begin position="159"/>
        <end position="175"/>
    </location>
</feature>
<feature type="disulfide bond" evidence="4">
    <location>
        <begin position="177"/>
        <end position="186"/>
    </location>
</feature>
<feature type="splice variant" id="VSP_039970" description="In isoform 2." evidence="6">
    <location>
        <begin position="37"/>
        <end position="223"/>
    </location>
</feature>
<feature type="sequence conflict" description="In Ref. 1; BAB21981." evidence="7" ref="1">
    <original>A</original>
    <variation>S</variation>
    <location>
        <position position="23"/>
    </location>
</feature>
<feature type="sequence conflict" description="In Ref. 1; BAB21981." evidence="7" ref="1">
    <original>E</original>
    <variation>K</variation>
    <location>
        <position position="28"/>
    </location>
</feature>
<feature type="sequence conflict" description="In Ref. 1; BAB21981." evidence="7" ref="1">
    <original>T</original>
    <variation>P</variation>
    <location>
        <position position="65"/>
    </location>
</feature>
<feature type="sequence conflict" description="In Ref. 1; BAB21981." evidence="7" ref="1">
    <original>D</original>
    <variation>N</variation>
    <location>
        <position position="70"/>
    </location>
</feature>
<proteinExistence type="evidence at protein level"/>
<organism>
    <name type="scientific">Mus musculus</name>
    <name type="common">Mouse</name>
    <dbReference type="NCBI Taxonomy" id="10090"/>
    <lineage>
        <taxon>Eukaryota</taxon>
        <taxon>Metazoa</taxon>
        <taxon>Chordata</taxon>
        <taxon>Craniata</taxon>
        <taxon>Vertebrata</taxon>
        <taxon>Euteleostomi</taxon>
        <taxon>Mammalia</taxon>
        <taxon>Eutheria</taxon>
        <taxon>Euarchontoglires</taxon>
        <taxon>Glires</taxon>
        <taxon>Rodentia</taxon>
        <taxon>Myomorpha</taxon>
        <taxon>Muroidea</taxon>
        <taxon>Muridae</taxon>
        <taxon>Murinae</taxon>
        <taxon>Mus</taxon>
        <taxon>Mus</taxon>
    </lineage>
</organism>